<name>ARAB_SALTI</name>
<comment type="catalytic activity">
    <reaction evidence="2">
        <text>D-ribulose + ATP = D-ribulose 5-phosphate + ADP + H(+)</text>
        <dbReference type="Rhea" id="RHEA:17601"/>
        <dbReference type="ChEBI" id="CHEBI:15378"/>
        <dbReference type="ChEBI" id="CHEBI:17173"/>
        <dbReference type="ChEBI" id="CHEBI:30616"/>
        <dbReference type="ChEBI" id="CHEBI:58121"/>
        <dbReference type="ChEBI" id="CHEBI:456216"/>
        <dbReference type="EC" id="2.7.1.16"/>
    </reaction>
</comment>
<comment type="catalytic activity">
    <reaction evidence="2">
        <text>L-ribulose + ATP = L-ribulose 5-phosphate + ADP + H(+)</text>
        <dbReference type="Rhea" id="RHEA:22072"/>
        <dbReference type="ChEBI" id="CHEBI:15378"/>
        <dbReference type="ChEBI" id="CHEBI:16880"/>
        <dbReference type="ChEBI" id="CHEBI:30616"/>
        <dbReference type="ChEBI" id="CHEBI:58226"/>
        <dbReference type="ChEBI" id="CHEBI:456216"/>
        <dbReference type="EC" id="2.7.1.16"/>
    </reaction>
</comment>
<comment type="pathway">
    <text evidence="2">Carbohydrate degradation; L-arabinose degradation via L-ribulose; D-xylulose 5-phosphate from L-arabinose (bacterial route): step 2/3.</text>
</comment>
<comment type="similarity">
    <text evidence="2">Belongs to the ribulokinase family.</text>
</comment>
<feature type="initiator methionine" description="Removed" evidence="1">
    <location>
        <position position="1"/>
    </location>
</feature>
<feature type="chain" id="PRO_0000198363" description="Ribulokinase">
    <location>
        <begin position="2"/>
        <end position="569"/>
    </location>
</feature>
<dbReference type="EC" id="2.7.1.16" evidence="2"/>
<dbReference type="EMBL" id="AL513382">
    <property type="protein sequence ID" value="CAD01260.1"/>
    <property type="molecule type" value="Genomic_DNA"/>
</dbReference>
<dbReference type="EMBL" id="AE014613">
    <property type="protein sequence ID" value="AAO67839.1"/>
    <property type="molecule type" value="Genomic_DNA"/>
</dbReference>
<dbReference type="RefSeq" id="NP_454715.1">
    <property type="nucleotide sequence ID" value="NC_003198.1"/>
</dbReference>
<dbReference type="RefSeq" id="WP_000951805.1">
    <property type="nucleotide sequence ID" value="NZ_WSUR01000028.1"/>
</dbReference>
<dbReference type="SMR" id="P58542"/>
<dbReference type="STRING" id="220341.gene:17584162"/>
<dbReference type="KEGG" id="stt:t0107"/>
<dbReference type="KEGG" id="sty:STY0120"/>
<dbReference type="PATRIC" id="fig|220341.7.peg.120"/>
<dbReference type="eggNOG" id="COG1069">
    <property type="taxonomic scope" value="Bacteria"/>
</dbReference>
<dbReference type="HOGENOM" id="CLU_009281_9_1_6"/>
<dbReference type="OMA" id="HKAMWHE"/>
<dbReference type="OrthoDB" id="9805576at2"/>
<dbReference type="UniPathway" id="UPA00145">
    <property type="reaction ID" value="UER00566"/>
</dbReference>
<dbReference type="Proteomes" id="UP000000541">
    <property type="component" value="Chromosome"/>
</dbReference>
<dbReference type="Proteomes" id="UP000002670">
    <property type="component" value="Chromosome"/>
</dbReference>
<dbReference type="GO" id="GO:0005737">
    <property type="term" value="C:cytoplasm"/>
    <property type="evidence" value="ECO:0007669"/>
    <property type="project" value="TreeGrafter"/>
</dbReference>
<dbReference type="GO" id="GO:0005524">
    <property type="term" value="F:ATP binding"/>
    <property type="evidence" value="ECO:0007669"/>
    <property type="project" value="UniProtKB-KW"/>
</dbReference>
<dbReference type="GO" id="GO:0019150">
    <property type="term" value="F:D-ribulokinase activity"/>
    <property type="evidence" value="ECO:0007669"/>
    <property type="project" value="RHEA"/>
</dbReference>
<dbReference type="GO" id="GO:0008741">
    <property type="term" value="F:ribulokinase activity"/>
    <property type="evidence" value="ECO:0007669"/>
    <property type="project" value="UniProtKB-UniRule"/>
</dbReference>
<dbReference type="GO" id="GO:0019569">
    <property type="term" value="P:L-arabinose catabolic process to xylulose 5-phosphate"/>
    <property type="evidence" value="ECO:0007669"/>
    <property type="project" value="UniProtKB-UniRule"/>
</dbReference>
<dbReference type="CDD" id="cd07781">
    <property type="entry name" value="ASKHA_NBD_FGGY_L-RBK"/>
    <property type="match status" value="1"/>
</dbReference>
<dbReference type="Gene3D" id="1.20.58.2240">
    <property type="match status" value="1"/>
</dbReference>
<dbReference type="Gene3D" id="3.30.420.40">
    <property type="match status" value="1"/>
</dbReference>
<dbReference type="HAMAP" id="MF_00520">
    <property type="entry name" value="Ribulokinase"/>
    <property type="match status" value="1"/>
</dbReference>
<dbReference type="InterPro" id="IPR043129">
    <property type="entry name" value="ATPase_NBD"/>
</dbReference>
<dbReference type="InterPro" id="IPR018485">
    <property type="entry name" value="FGGY_C"/>
</dbReference>
<dbReference type="InterPro" id="IPR005929">
    <property type="entry name" value="Ribulokinase"/>
</dbReference>
<dbReference type="NCBIfam" id="TIGR01234">
    <property type="entry name" value="L-ribulokinase"/>
    <property type="match status" value="1"/>
</dbReference>
<dbReference type="NCBIfam" id="NF003154">
    <property type="entry name" value="PRK04123.1"/>
    <property type="match status" value="1"/>
</dbReference>
<dbReference type="PANTHER" id="PTHR43435:SF4">
    <property type="entry name" value="FGGY CARBOHYDRATE KINASE DOMAIN-CONTAINING PROTEIN"/>
    <property type="match status" value="1"/>
</dbReference>
<dbReference type="PANTHER" id="PTHR43435">
    <property type="entry name" value="RIBULOKINASE"/>
    <property type="match status" value="1"/>
</dbReference>
<dbReference type="Pfam" id="PF02782">
    <property type="entry name" value="FGGY_C"/>
    <property type="match status" value="1"/>
</dbReference>
<dbReference type="SUPFAM" id="SSF53067">
    <property type="entry name" value="Actin-like ATPase domain"/>
    <property type="match status" value="2"/>
</dbReference>
<gene>
    <name evidence="2" type="primary">araB</name>
    <name type="ordered locus">STY0120</name>
    <name type="ordered locus">t0107</name>
</gene>
<proteinExistence type="inferred from homology"/>
<keyword id="KW-0054">Arabinose catabolism</keyword>
<keyword id="KW-0067">ATP-binding</keyword>
<keyword id="KW-0119">Carbohydrate metabolism</keyword>
<keyword id="KW-0418">Kinase</keyword>
<keyword id="KW-0547">Nucleotide-binding</keyword>
<keyword id="KW-0808">Transferase</keyword>
<reference key="1">
    <citation type="journal article" date="2001" name="Nature">
        <title>Complete genome sequence of a multiple drug resistant Salmonella enterica serovar Typhi CT18.</title>
        <authorList>
            <person name="Parkhill J."/>
            <person name="Dougan G."/>
            <person name="James K.D."/>
            <person name="Thomson N.R."/>
            <person name="Pickard D."/>
            <person name="Wain J."/>
            <person name="Churcher C.M."/>
            <person name="Mungall K.L."/>
            <person name="Bentley S.D."/>
            <person name="Holden M.T.G."/>
            <person name="Sebaihia M."/>
            <person name="Baker S."/>
            <person name="Basham D."/>
            <person name="Brooks K."/>
            <person name="Chillingworth T."/>
            <person name="Connerton P."/>
            <person name="Cronin A."/>
            <person name="Davis P."/>
            <person name="Davies R.M."/>
            <person name="Dowd L."/>
            <person name="White N."/>
            <person name="Farrar J."/>
            <person name="Feltwell T."/>
            <person name="Hamlin N."/>
            <person name="Haque A."/>
            <person name="Hien T.T."/>
            <person name="Holroyd S."/>
            <person name="Jagels K."/>
            <person name="Krogh A."/>
            <person name="Larsen T.S."/>
            <person name="Leather S."/>
            <person name="Moule S."/>
            <person name="O'Gaora P."/>
            <person name="Parry C."/>
            <person name="Quail M.A."/>
            <person name="Rutherford K.M."/>
            <person name="Simmonds M."/>
            <person name="Skelton J."/>
            <person name="Stevens K."/>
            <person name="Whitehead S."/>
            <person name="Barrell B.G."/>
        </authorList>
    </citation>
    <scope>NUCLEOTIDE SEQUENCE [LARGE SCALE GENOMIC DNA]</scope>
    <source>
        <strain>CT18</strain>
    </source>
</reference>
<reference key="2">
    <citation type="journal article" date="2003" name="J. Bacteriol.">
        <title>Comparative genomics of Salmonella enterica serovar Typhi strains Ty2 and CT18.</title>
        <authorList>
            <person name="Deng W."/>
            <person name="Liou S.-R."/>
            <person name="Plunkett G. III"/>
            <person name="Mayhew G.F."/>
            <person name="Rose D.J."/>
            <person name="Burland V."/>
            <person name="Kodoyianni V."/>
            <person name="Schwartz D.C."/>
            <person name="Blattner F.R."/>
        </authorList>
    </citation>
    <scope>NUCLEOTIDE SEQUENCE [LARGE SCALE GENOMIC DNA]</scope>
    <source>
        <strain>ATCC 700931 / Ty2</strain>
    </source>
</reference>
<protein>
    <recommendedName>
        <fullName evidence="2">Ribulokinase</fullName>
        <ecNumber evidence="2">2.7.1.16</ecNumber>
    </recommendedName>
</protein>
<sequence>MAIAIGLDFGSDSVRALAVDCATGDEIATSVEWYLRWQEGRYCDGPNNQFRHHPRDYMESMEAALKAVLAQLSAAQRANVVGIGVDSTGSTPAPIDADGNVLALRPEFAENPNAMFVLWKDHTAVEEADEITRLCHKPGKVDYSRYIGGIYSSEWFWAKILHVTRQDSAVAQAAVSWIELCDWVPALLSGTTRPQDIRRGRCSAGHKTLWHESWGGLPPASFFDELDPCINRHLRYPLFSETFTADLPVGTLCAEWAQRLGLPESVVISGGAFDCHMGAVGAGAQPNTLVKVIGTSTCDILIADKQSVGDRAVKGICGQVDGSVVPNFIGLEAGQSAFGDIYAWFSRVLSWPLEQLAAQHPELKTQINASQKQLLPALTDAWAKNPSLDHLPVVLDWFNGRRTPNANQRLKGVITDLNLATDAPALFGGLVASTAFGARAIQECFTEQGIAVNNVMALGGIARKNQVIMQVCCDVLNRPLQIVASDQCCALGAAIFAAVAAKVHADIPAAQQSMASAVERTLRPRPEQAQRFERLYRRYQQWALSAEQHYLPTAAPAPTTPANQAILTH</sequence>
<organism>
    <name type="scientific">Salmonella typhi</name>
    <dbReference type="NCBI Taxonomy" id="90370"/>
    <lineage>
        <taxon>Bacteria</taxon>
        <taxon>Pseudomonadati</taxon>
        <taxon>Pseudomonadota</taxon>
        <taxon>Gammaproteobacteria</taxon>
        <taxon>Enterobacterales</taxon>
        <taxon>Enterobacteriaceae</taxon>
        <taxon>Salmonella</taxon>
    </lineage>
</organism>
<accession>P58542</accession>
<evidence type="ECO:0000250" key="1"/>
<evidence type="ECO:0000255" key="2">
    <source>
        <dbReference type="HAMAP-Rule" id="MF_00520"/>
    </source>
</evidence>